<evidence type="ECO:0000255" key="1">
    <source>
        <dbReference type="HAMAP-Rule" id="MF_01152"/>
    </source>
</evidence>
<name>DNAJ_ECOLC</name>
<accession>B1IRF9</accession>
<gene>
    <name evidence="1" type="primary">dnaJ</name>
    <name type="ordered locus">EcolC_3641</name>
</gene>
<feature type="chain" id="PRO_1000085189" description="Chaperone protein DnaJ">
    <location>
        <begin position="1"/>
        <end position="376"/>
    </location>
</feature>
<feature type="domain" description="J" evidence="1">
    <location>
        <begin position="5"/>
        <end position="70"/>
    </location>
</feature>
<feature type="repeat" description="CXXCXGXG motif">
    <location>
        <begin position="144"/>
        <end position="151"/>
    </location>
</feature>
<feature type="repeat" description="CXXCXGXG motif">
    <location>
        <begin position="161"/>
        <end position="168"/>
    </location>
</feature>
<feature type="repeat" description="CXXCXGXG motif">
    <location>
        <begin position="183"/>
        <end position="190"/>
    </location>
</feature>
<feature type="repeat" description="CXXCXGXG motif">
    <location>
        <begin position="197"/>
        <end position="204"/>
    </location>
</feature>
<feature type="zinc finger region" description="CR-type" evidence="1">
    <location>
        <begin position="131"/>
        <end position="209"/>
    </location>
</feature>
<feature type="binding site" evidence="1">
    <location>
        <position position="144"/>
    </location>
    <ligand>
        <name>Zn(2+)</name>
        <dbReference type="ChEBI" id="CHEBI:29105"/>
        <label>1</label>
    </ligand>
</feature>
<feature type="binding site" evidence="1">
    <location>
        <position position="147"/>
    </location>
    <ligand>
        <name>Zn(2+)</name>
        <dbReference type="ChEBI" id="CHEBI:29105"/>
        <label>1</label>
    </ligand>
</feature>
<feature type="binding site" evidence="1">
    <location>
        <position position="161"/>
    </location>
    <ligand>
        <name>Zn(2+)</name>
        <dbReference type="ChEBI" id="CHEBI:29105"/>
        <label>2</label>
    </ligand>
</feature>
<feature type="binding site" evidence="1">
    <location>
        <position position="164"/>
    </location>
    <ligand>
        <name>Zn(2+)</name>
        <dbReference type="ChEBI" id="CHEBI:29105"/>
        <label>2</label>
    </ligand>
</feature>
<feature type="binding site" evidence="1">
    <location>
        <position position="183"/>
    </location>
    <ligand>
        <name>Zn(2+)</name>
        <dbReference type="ChEBI" id="CHEBI:29105"/>
        <label>2</label>
    </ligand>
</feature>
<feature type="binding site" evidence="1">
    <location>
        <position position="186"/>
    </location>
    <ligand>
        <name>Zn(2+)</name>
        <dbReference type="ChEBI" id="CHEBI:29105"/>
        <label>2</label>
    </ligand>
</feature>
<feature type="binding site" evidence="1">
    <location>
        <position position="197"/>
    </location>
    <ligand>
        <name>Zn(2+)</name>
        <dbReference type="ChEBI" id="CHEBI:29105"/>
        <label>1</label>
    </ligand>
</feature>
<feature type="binding site" evidence="1">
    <location>
        <position position="200"/>
    </location>
    <ligand>
        <name>Zn(2+)</name>
        <dbReference type="ChEBI" id="CHEBI:29105"/>
        <label>1</label>
    </ligand>
</feature>
<dbReference type="EMBL" id="CP000946">
    <property type="protein sequence ID" value="ACA79252.1"/>
    <property type="molecule type" value="Genomic_DNA"/>
</dbReference>
<dbReference type="RefSeq" id="WP_001118464.1">
    <property type="nucleotide sequence ID" value="NZ_MTFT01000024.1"/>
</dbReference>
<dbReference type="BMRB" id="B1IRF9"/>
<dbReference type="SMR" id="B1IRF9"/>
<dbReference type="GeneID" id="93777428"/>
<dbReference type="KEGG" id="ecl:EcolC_3641"/>
<dbReference type="HOGENOM" id="CLU_017633_0_7_6"/>
<dbReference type="GO" id="GO:0005737">
    <property type="term" value="C:cytoplasm"/>
    <property type="evidence" value="ECO:0007669"/>
    <property type="project" value="UniProtKB-SubCell"/>
</dbReference>
<dbReference type="GO" id="GO:0005524">
    <property type="term" value="F:ATP binding"/>
    <property type="evidence" value="ECO:0007669"/>
    <property type="project" value="InterPro"/>
</dbReference>
<dbReference type="GO" id="GO:0031072">
    <property type="term" value="F:heat shock protein binding"/>
    <property type="evidence" value="ECO:0007669"/>
    <property type="project" value="InterPro"/>
</dbReference>
<dbReference type="GO" id="GO:0051082">
    <property type="term" value="F:unfolded protein binding"/>
    <property type="evidence" value="ECO:0007669"/>
    <property type="project" value="UniProtKB-UniRule"/>
</dbReference>
<dbReference type="GO" id="GO:0008270">
    <property type="term" value="F:zinc ion binding"/>
    <property type="evidence" value="ECO:0007669"/>
    <property type="project" value="UniProtKB-UniRule"/>
</dbReference>
<dbReference type="GO" id="GO:0051085">
    <property type="term" value="P:chaperone cofactor-dependent protein refolding"/>
    <property type="evidence" value="ECO:0007669"/>
    <property type="project" value="TreeGrafter"/>
</dbReference>
<dbReference type="GO" id="GO:0006260">
    <property type="term" value="P:DNA replication"/>
    <property type="evidence" value="ECO:0007669"/>
    <property type="project" value="UniProtKB-KW"/>
</dbReference>
<dbReference type="GO" id="GO:0042026">
    <property type="term" value="P:protein refolding"/>
    <property type="evidence" value="ECO:0007669"/>
    <property type="project" value="TreeGrafter"/>
</dbReference>
<dbReference type="GO" id="GO:0009408">
    <property type="term" value="P:response to heat"/>
    <property type="evidence" value="ECO:0007669"/>
    <property type="project" value="InterPro"/>
</dbReference>
<dbReference type="CDD" id="cd06257">
    <property type="entry name" value="DnaJ"/>
    <property type="match status" value="1"/>
</dbReference>
<dbReference type="CDD" id="cd10747">
    <property type="entry name" value="DnaJ_C"/>
    <property type="match status" value="1"/>
</dbReference>
<dbReference type="CDD" id="cd10719">
    <property type="entry name" value="DnaJ_zf"/>
    <property type="match status" value="1"/>
</dbReference>
<dbReference type="FunFam" id="1.10.287.110:FF:000003">
    <property type="entry name" value="Molecular chaperone DnaJ"/>
    <property type="match status" value="1"/>
</dbReference>
<dbReference type="FunFam" id="2.10.230.10:FF:000002">
    <property type="entry name" value="Molecular chaperone DnaJ"/>
    <property type="match status" value="1"/>
</dbReference>
<dbReference type="FunFam" id="2.60.260.20:FF:000004">
    <property type="entry name" value="Molecular chaperone DnaJ"/>
    <property type="match status" value="1"/>
</dbReference>
<dbReference type="Gene3D" id="1.10.287.110">
    <property type="entry name" value="DnaJ domain"/>
    <property type="match status" value="1"/>
</dbReference>
<dbReference type="Gene3D" id="2.10.230.10">
    <property type="entry name" value="Heat shock protein DnaJ, cysteine-rich domain"/>
    <property type="match status" value="1"/>
</dbReference>
<dbReference type="Gene3D" id="2.60.260.20">
    <property type="entry name" value="Urease metallochaperone UreE, N-terminal domain"/>
    <property type="match status" value="2"/>
</dbReference>
<dbReference type="HAMAP" id="MF_01152">
    <property type="entry name" value="DnaJ"/>
    <property type="match status" value="1"/>
</dbReference>
<dbReference type="InterPro" id="IPR012724">
    <property type="entry name" value="DnaJ"/>
</dbReference>
<dbReference type="InterPro" id="IPR002939">
    <property type="entry name" value="DnaJ_C"/>
</dbReference>
<dbReference type="InterPro" id="IPR001623">
    <property type="entry name" value="DnaJ_domain"/>
</dbReference>
<dbReference type="InterPro" id="IPR018253">
    <property type="entry name" value="DnaJ_domain_CS"/>
</dbReference>
<dbReference type="InterPro" id="IPR008971">
    <property type="entry name" value="HSP40/DnaJ_pept-bd"/>
</dbReference>
<dbReference type="InterPro" id="IPR001305">
    <property type="entry name" value="HSP_DnaJ_Cys-rich_dom"/>
</dbReference>
<dbReference type="InterPro" id="IPR036410">
    <property type="entry name" value="HSP_DnaJ_Cys-rich_dom_sf"/>
</dbReference>
<dbReference type="InterPro" id="IPR036869">
    <property type="entry name" value="J_dom_sf"/>
</dbReference>
<dbReference type="NCBIfam" id="TIGR02349">
    <property type="entry name" value="DnaJ_bact"/>
    <property type="match status" value="1"/>
</dbReference>
<dbReference type="NCBIfam" id="NF008035">
    <property type="entry name" value="PRK10767.1"/>
    <property type="match status" value="1"/>
</dbReference>
<dbReference type="PANTHER" id="PTHR43096:SF48">
    <property type="entry name" value="CHAPERONE PROTEIN DNAJ"/>
    <property type="match status" value="1"/>
</dbReference>
<dbReference type="PANTHER" id="PTHR43096">
    <property type="entry name" value="DNAJ HOMOLOG 1, MITOCHONDRIAL-RELATED"/>
    <property type="match status" value="1"/>
</dbReference>
<dbReference type="Pfam" id="PF00226">
    <property type="entry name" value="DnaJ"/>
    <property type="match status" value="1"/>
</dbReference>
<dbReference type="Pfam" id="PF01556">
    <property type="entry name" value="DnaJ_C"/>
    <property type="match status" value="1"/>
</dbReference>
<dbReference type="Pfam" id="PF00684">
    <property type="entry name" value="DnaJ_CXXCXGXG"/>
    <property type="match status" value="1"/>
</dbReference>
<dbReference type="PRINTS" id="PR00625">
    <property type="entry name" value="JDOMAIN"/>
</dbReference>
<dbReference type="SMART" id="SM00271">
    <property type="entry name" value="DnaJ"/>
    <property type="match status" value="1"/>
</dbReference>
<dbReference type="SUPFAM" id="SSF46565">
    <property type="entry name" value="Chaperone J-domain"/>
    <property type="match status" value="1"/>
</dbReference>
<dbReference type="SUPFAM" id="SSF57938">
    <property type="entry name" value="DnaJ/Hsp40 cysteine-rich domain"/>
    <property type="match status" value="1"/>
</dbReference>
<dbReference type="SUPFAM" id="SSF49493">
    <property type="entry name" value="HSP40/DnaJ peptide-binding domain"/>
    <property type="match status" value="2"/>
</dbReference>
<dbReference type="PROSITE" id="PS00636">
    <property type="entry name" value="DNAJ_1"/>
    <property type="match status" value="1"/>
</dbReference>
<dbReference type="PROSITE" id="PS50076">
    <property type="entry name" value="DNAJ_2"/>
    <property type="match status" value="1"/>
</dbReference>
<dbReference type="PROSITE" id="PS51188">
    <property type="entry name" value="ZF_CR"/>
    <property type="match status" value="1"/>
</dbReference>
<reference key="1">
    <citation type="submission" date="2008-02" db="EMBL/GenBank/DDBJ databases">
        <title>Complete sequence of Escherichia coli C str. ATCC 8739.</title>
        <authorList>
            <person name="Copeland A."/>
            <person name="Lucas S."/>
            <person name="Lapidus A."/>
            <person name="Glavina del Rio T."/>
            <person name="Dalin E."/>
            <person name="Tice H."/>
            <person name="Bruce D."/>
            <person name="Goodwin L."/>
            <person name="Pitluck S."/>
            <person name="Kiss H."/>
            <person name="Brettin T."/>
            <person name="Detter J.C."/>
            <person name="Han C."/>
            <person name="Kuske C.R."/>
            <person name="Schmutz J."/>
            <person name="Larimer F."/>
            <person name="Land M."/>
            <person name="Hauser L."/>
            <person name="Kyrpides N."/>
            <person name="Mikhailova N."/>
            <person name="Ingram L."/>
            <person name="Richardson P."/>
        </authorList>
    </citation>
    <scope>NUCLEOTIDE SEQUENCE [LARGE SCALE GENOMIC DNA]</scope>
    <source>
        <strain>ATCC 8739 / DSM 1576 / NBRC 3972 / NCIMB 8545 / WDCM 00012 / Crooks</strain>
    </source>
</reference>
<organism>
    <name type="scientific">Escherichia coli (strain ATCC 8739 / DSM 1576 / NBRC 3972 / NCIMB 8545 / WDCM 00012 / Crooks)</name>
    <dbReference type="NCBI Taxonomy" id="481805"/>
    <lineage>
        <taxon>Bacteria</taxon>
        <taxon>Pseudomonadati</taxon>
        <taxon>Pseudomonadota</taxon>
        <taxon>Gammaproteobacteria</taxon>
        <taxon>Enterobacterales</taxon>
        <taxon>Enterobacteriaceae</taxon>
        <taxon>Escherichia</taxon>
    </lineage>
</organism>
<sequence length="376" mass="41044">MAKQDYYEILGVSKTAEEREIKKAYKRLAMKYHPDRNQGDKEAEAKFKEIKEAYEVLTDSQKRAAYDQYGHAAFEQGGMGGGGFGGGADFSDIFGDVFGDIFGGGRGRQRAARGADLRYNMELTLEEAVRGVTKEIRIPTLEECDVCHGSGAKPGTQPQTCPTCHGSGQVQMRQGFFAVQQTCPHCQGRGTLIKDPCNKCHGHGRVERSKTLSVKIPAGVDTGDRIRLAGEGEAGEHGAPAGDLYVQVQVKQHPIFEREGNNLYCEVPINFAMAALGGEIEVPTLDGRVKLKVPGETQTGKLFRMRGKGVKSVRGGAQGDLLCRVVVETPVGLNEKQKQLLQELQESFGGPTGEHNSPRSKSFFDGVKKFFDDLTR</sequence>
<comment type="function">
    <text evidence="1">Participates actively in the response to hyperosmotic and heat shock by preventing the aggregation of stress-denatured proteins and by disaggregating proteins, also in an autonomous, DnaK-independent fashion. Unfolded proteins bind initially to DnaJ; upon interaction with the DnaJ-bound protein, DnaK hydrolyzes its bound ATP, resulting in the formation of a stable complex. GrpE releases ADP from DnaK; ATP binding to DnaK triggers the release of the substrate protein, thus completing the reaction cycle. Several rounds of ATP-dependent interactions between DnaJ, DnaK and GrpE are required for fully efficient folding. Also involved, together with DnaK and GrpE, in the DNA replication of plasmids through activation of initiation proteins.</text>
</comment>
<comment type="cofactor">
    <cofactor evidence="1">
        <name>Zn(2+)</name>
        <dbReference type="ChEBI" id="CHEBI:29105"/>
    </cofactor>
    <text evidence="1">Binds 2 Zn(2+) ions per monomer.</text>
</comment>
<comment type="subunit">
    <text evidence="1">Homodimer.</text>
</comment>
<comment type="subcellular location">
    <subcellularLocation>
        <location evidence="1">Cytoplasm</location>
    </subcellularLocation>
</comment>
<comment type="domain">
    <text evidence="1">The J domain is necessary and sufficient to stimulate DnaK ATPase activity. Zinc center 1 plays an important role in the autonomous, DnaK-independent chaperone activity of DnaJ. Zinc center 2 is essential for interaction with DnaK and for DnaJ activity.</text>
</comment>
<comment type="similarity">
    <text evidence="1">Belongs to the DnaJ family.</text>
</comment>
<protein>
    <recommendedName>
        <fullName evidence="1">Chaperone protein DnaJ</fullName>
    </recommendedName>
</protein>
<keyword id="KW-0143">Chaperone</keyword>
<keyword id="KW-0963">Cytoplasm</keyword>
<keyword id="KW-0235">DNA replication</keyword>
<keyword id="KW-0479">Metal-binding</keyword>
<keyword id="KW-0677">Repeat</keyword>
<keyword id="KW-0346">Stress response</keyword>
<keyword id="KW-0862">Zinc</keyword>
<keyword id="KW-0863">Zinc-finger</keyword>
<proteinExistence type="inferred from homology"/>